<dbReference type="EC" id="4.1.3.27"/>
<dbReference type="EMBL" id="AE016826">
    <property type="protein sequence ID" value="AAO27227.1"/>
    <property type="molecule type" value="Genomic_DNA"/>
</dbReference>
<dbReference type="RefSeq" id="WP_011091628.1">
    <property type="nucleotide sequence ID" value="NC_004545.1"/>
</dbReference>
<dbReference type="SMR" id="Q89A30"/>
<dbReference type="STRING" id="224915.bbp_525"/>
<dbReference type="MEROPS" id="C26.960"/>
<dbReference type="KEGG" id="bab:bbp_525"/>
<dbReference type="eggNOG" id="COG0512">
    <property type="taxonomic scope" value="Bacteria"/>
</dbReference>
<dbReference type="HOGENOM" id="CLU_014340_1_0_6"/>
<dbReference type="OrthoDB" id="9806430at2"/>
<dbReference type="UniPathway" id="UPA00035">
    <property type="reaction ID" value="UER00040"/>
</dbReference>
<dbReference type="Proteomes" id="UP000000601">
    <property type="component" value="Chromosome"/>
</dbReference>
<dbReference type="GO" id="GO:0005829">
    <property type="term" value="C:cytosol"/>
    <property type="evidence" value="ECO:0007669"/>
    <property type="project" value="TreeGrafter"/>
</dbReference>
<dbReference type="GO" id="GO:0004048">
    <property type="term" value="F:anthranilate phosphoribosyltransferase activity"/>
    <property type="evidence" value="ECO:0007669"/>
    <property type="project" value="TreeGrafter"/>
</dbReference>
<dbReference type="GO" id="GO:0004049">
    <property type="term" value="F:anthranilate synthase activity"/>
    <property type="evidence" value="ECO:0007669"/>
    <property type="project" value="UniProtKB-EC"/>
</dbReference>
<dbReference type="GO" id="GO:0000162">
    <property type="term" value="P:L-tryptophan biosynthetic process"/>
    <property type="evidence" value="ECO:0007669"/>
    <property type="project" value="UniProtKB-UniPathway"/>
</dbReference>
<dbReference type="GO" id="GO:0002047">
    <property type="term" value="P:phenazine biosynthetic process"/>
    <property type="evidence" value="ECO:0007669"/>
    <property type="project" value="TreeGrafter"/>
</dbReference>
<dbReference type="CDD" id="cd01743">
    <property type="entry name" value="GATase1_Anthranilate_Synthase"/>
    <property type="match status" value="1"/>
</dbReference>
<dbReference type="FunFam" id="3.40.50.880:FF:000003">
    <property type="entry name" value="Anthranilate synthase component II"/>
    <property type="match status" value="1"/>
</dbReference>
<dbReference type="Gene3D" id="3.40.50.880">
    <property type="match status" value="1"/>
</dbReference>
<dbReference type="InterPro" id="IPR050472">
    <property type="entry name" value="Anth_synth/Amidotransfase"/>
</dbReference>
<dbReference type="InterPro" id="IPR029062">
    <property type="entry name" value="Class_I_gatase-like"/>
</dbReference>
<dbReference type="InterPro" id="IPR017926">
    <property type="entry name" value="GATASE"/>
</dbReference>
<dbReference type="InterPro" id="IPR006221">
    <property type="entry name" value="TrpG/PapA_dom"/>
</dbReference>
<dbReference type="NCBIfam" id="TIGR00566">
    <property type="entry name" value="trpG_papA"/>
    <property type="match status" value="1"/>
</dbReference>
<dbReference type="PANTHER" id="PTHR43418:SF2">
    <property type="entry name" value="BIFUNCTIONAL PROTEIN TRPGD"/>
    <property type="match status" value="1"/>
</dbReference>
<dbReference type="PANTHER" id="PTHR43418">
    <property type="entry name" value="MULTIFUNCTIONAL TRYPTOPHAN BIOSYNTHESIS PROTEIN-RELATED"/>
    <property type="match status" value="1"/>
</dbReference>
<dbReference type="Pfam" id="PF00117">
    <property type="entry name" value="GATase"/>
    <property type="match status" value="1"/>
</dbReference>
<dbReference type="PRINTS" id="PR00097">
    <property type="entry name" value="ANTSNTHASEII"/>
</dbReference>
<dbReference type="PRINTS" id="PR00099">
    <property type="entry name" value="CPSGATASE"/>
</dbReference>
<dbReference type="PRINTS" id="PR00096">
    <property type="entry name" value="GATASE"/>
</dbReference>
<dbReference type="SUPFAM" id="SSF52317">
    <property type="entry name" value="Class I glutamine amidotransferase-like"/>
    <property type="match status" value="1"/>
</dbReference>
<dbReference type="PROSITE" id="PS51273">
    <property type="entry name" value="GATASE_TYPE_1"/>
    <property type="match status" value="1"/>
</dbReference>
<name>TRPG_BUCBP</name>
<gene>
    <name type="primary">trpG</name>
    <name type="ordered locus">bbp_525</name>
</gene>
<protein>
    <recommendedName>
        <fullName>Anthranilate synthase component 2</fullName>
        <shortName>AS</shortName>
        <shortName>ASII</shortName>
        <ecNumber>4.1.3.27</ecNumber>
    </recommendedName>
    <alternativeName>
        <fullName>Anthranilate synthase, GATase component</fullName>
    </alternativeName>
    <alternativeName>
        <fullName>Anthranilate synthase, glutamine amidotransferase component</fullName>
    </alternativeName>
</protein>
<organism>
    <name type="scientific">Buchnera aphidicola subsp. Baizongia pistaciae (strain Bp)</name>
    <dbReference type="NCBI Taxonomy" id="224915"/>
    <lineage>
        <taxon>Bacteria</taxon>
        <taxon>Pseudomonadati</taxon>
        <taxon>Pseudomonadota</taxon>
        <taxon>Gammaproteobacteria</taxon>
        <taxon>Enterobacterales</taxon>
        <taxon>Erwiniaceae</taxon>
        <taxon>Buchnera</taxon>
    </lineage>
</organism>
<feature type="chain" id="PRO_0000056874" description="Anthranilate synthase component 2">
    <location>
        <begin position="1"/>
        <end position="192"/>
    </location>
</feature>
<feature type="domain" description="Glutamine amidotransferase type-1" evidence="3">
    <location>
        <begin position="3"/>
        <end position="192"/>
    </location>
</feature>
<feature type="active site" description="Nucleophile; for GATase activity" evidence="3">
    <location>
        <position position="84"/>
    </location>
</feature>
<feature type="active site" description="For GATase activity" evidence="3">
    <location>
        <position position="170"/>
    </location>
</feature>
<feature type="active site" description="For GATase activity" evidence="3">
    <location>
        <position position="172"/>
    </location>
</feature>
<feature type="binding site" evidence="2">
    <location>
        <begin position="57"/>
        <end position="59"/>
    </location>
    <ligand>
        <name>L-glutamine</name>
        <dbReference type="ChEBI" id="CHEBI:58359"/>
    </ligand>
</feature>
<feature type="binding site" evidence="2">
    <location>
        <position position="88"/>
    </location>
    <ligand>
        <name>L-glutamine</name>
        <dbReference type="ChEBI" id="CHEBI:58359"/>
    </ligand>
</feature>
<feature type="binding site" evidence="2">
    <location>
        <begin position="134"/>
        <end position="135"/>
    </location>
    <ligand>
        <name>L-glutamine</name>
        <dbReference type="ChEBI" id="CHEBI:58359"/>
    </ligand>
</feature>
<accession>Q89A30</accession>
<reference key="1">
    <citation type="journal article" date="2003" name="Proc. Natl. Acad. Sci. U.S.A.">
        <title>Reductive genome evolution in Buchnera aphidicola.</title>
        <authorList>
            <person name="van Ham R.C.H.J."/>
            <person name="Kamerbeek J."/>
            <person name="Palacios C."/>
            <person name="Rausell C."/>
            <person name="Abascal F."/>
            <person name="Bastolla U."/>
            <person name="Fernandez J.M."/>
            <person name="Jimenez L."/>
            <person name="Postigo M."/>
            <person name="Silva F.J."/>
            <person name="Tamames J."/>
            <person name="Viguera E."/>
            <person name="Latorre A."/>
            <person name="Valencia A."/>
            <person name="Moran F."/>
            <person name="Moya A."/>
        </authorList>
    </citation>
    <scope>NUCLEOTIDE SEQUENCE [LARGE SCALE GENOMIC DNA]</scope>
    <source>
        <strain>Bp</strain>
    </source>
</reference>
<proteinExistence type="inferred from homology"/>
<evidence type="ECO:0000250" key="1"/>
<evidence type="ECO:0000250" key="2">
    <source>
        <dbReference type="UniProtKB" id="P00900"/>
    </source>
</evidence>
<evidence type="ECO:0000255" key="3">
    <source>
        <dbReference type="PROSITE-ProRule" id="PRU00605"/>
    </source>
</evidence>
<keyword id="KW-0028">Amino-acid biosynthesis</keyword>
<keyword id="KW-0057">Aromatic amino acid biosynthesis</keyword>
<keyword id="KW-0315">Glutamine amidotransferase</keyword>
<keyword id="KW-0456">Lyase</keyword>
<keyword id="KW-1185">Reference proteome</keyword>
<keyword id="KW-0822">Tryptophan biosynthesis</keyword>
<comment type="function">
    <text evidence="1">Part of a heterotetrameric complex that catalyzes the two-step biosynthesis of anthranilate, an intermediate in the biosynthesis of L-tryptophan. In the first step, the glutamine-binding beta subunit (TrpG) of anthranilate synthase (AS) provides the glutamine amidotransferase activity which generates ammonia as a substrate that, along with chorismate, is used in the second step, catalyzed by the large alpha subunit of AS (TrpE) to produce anthranilate. In the absence of TrpG, TrpE can synthesize anthranilate directly from chorismate and high concentrations of ammonia (By similarity).</text>
</comment>
<comment type="catalytic activity">
    <reaction>
        <text>chorismate + L-glutamine = anthranilate + pyruvate + L-glutamate + H(+)</text>
        <dbReference type="Rhea" id="RHEA:21732"/>
        <dbReference type="ChEBI" id="CHEBI:15361"/>
        <dbReference type="ChEBI" id="CHEBI:15378"/>
        <dbReference type="ChEBI" id="CHEBI:16567"/>
        <dbReference type="ChEBI" id="CHEBI:29748"/>
        <dbReference type="ChEBI" id="CHEBI:29985"/>
        <dbReference type="ChEBI" id="CHEBI:58359"/>
        <dbReference type="EC" id="4.1.3.27"/>
    </reaction>
</comment>
<comment type="pathway">
    <text>Amino-acid biosynthesis; L-tryptophan biosynthesis; L-tryptophan from chorismate: step 1/5.</text>
</comment>
<comment type="subunit">
    <text evidence="1">Heterotetramer consisting of two non-identical subunits: a beta subunit (TrpG) and a large alpha subunit (TrpE).</text>
</comment>
<sequence>MGNILLLDNIDSFTYNLVDQLRSNFHQVFVYRNTVRKNIILKKLSKMINPILILSPGPGNPDNAGCMPQLLMELKGKLPIIGICLGHQAIVKMYGGHVGYSGEILHGQASLINHDNKAMFLGMSNPLPVARYHSLICSNIPNMLVVNAHFNNMVMAVRNDYEKICGFQFHPESILTTRGTEFLQRVIQWTKI</sequence>